<accession>P57696</accession>
<evidence type="ECO:0000250" key="1">
    <source>
        <dbReference type="UniProtKB" id="P0AC13"/>
    </source>
</evidence>
<evidence type="ECO:0000250" key="2">
    <source>
        <dbReference type="UniProtKB" id="P9WND1"/>
    </source>
</evidence>
<evidence type="ECO:0000255" key="3">
    <source>
        <dbReference type="PROSITE-ProRule" id="PRU00334"/>
    </source>
</evidence>
<evidence type="ECO:0000305" key="4"/>
<name>DHPS_NEIMC</name>
<feature type="chain" id="PRO_0000168219" description="Dihydropteroate synthase">
    <location>
        <begin position="1"/>
        <end position="283"/>
    </location>
</feature>
<feature type="domain" description="Pterin-binding" evidence="3">
    <location>
        <begin position="18"/>
        <end position="274"/>
    </location>
</feature>
<feature type="binding site" evidence="2">
    <location>
        <position position="25"/>
    </location>
    <ligand>
        <name>Mg(2+)</name>
        <dbReference type="ChEBI" id="CHEBI:18420"/>
    </ligand>
</feature>
<feature type="binding site" evidence="1">
    <location>
        <position position="66"/>
    </location>
    <ligand>
        <name>(7,8-dihydropterin-6-yl)methyl diphosphate</name>
        <dbReference type="ChEBI" id="CHEBI:72950"/>
    </ligand>
</feature>
<feature type="binding site" evidence="1">
    <location>
        <position position="99"/>
    </location>
    <ligand>
        <name>(7,8-dihydropterin-6-yl)methyl diphosphate</name>
        <dbReference type="ChEBI" id="CHEBI:72950"/>
    </ligand>
</feature>
<feature type="binding site" evidence="1">
    <location>
        <position position="119"/>
    </location>
    <ligand>
        <name>(7,8-dihydropterin-6-yl)methyl diphosphate</name>
        <dbReference type="ChEBI" id="CHEBI:72950"/>
    </ligand>
</feature>
<feature type="binding site" evidence="1">
    <location>
        <position position="190"/>
    </location>
    <ligand>
        <name>(7,8-dihydropterin-6-yl)methyl diphosphate</name>
        <dbReference type="ChEBI" id="CHEBI:72950"/>
    </ligand>
</feature>
<feature type="binding site" evidence="1">
    <location>
        <position position="227"/>
    </location>
    <ligand>
        <name>(7,8-dihydropterin-6-yl)methyl diphosphate</name>
        <dbReference type="ChEBI" id="CHEBI:72950"/>
    </ligand>
</feature>
<feature type="binding site" evidence="1">
    <location>
        <begin position="262"/>
        <end position="264"/>
    </location>
    <ligand>
        <name>(7,8-dihydropterin-6-yl)methyl diphosphate</name>
        <dbReference type="ChEBI" id="CHEBI:72950"/>
    </ligand>
</feature>
<feature type="sequence variant" description="In strain: BT054.">
    <original>V</original>
    <variation>A</variation>
    <location>
        <position position="36"/>
    </location>
</feature>
<feature type="sequence variant" description="In strain: BT054.">
    <original>QT</original>
    <variation>RI</variation>
    <location>
        <begin position="42"/>
        <end position="43"/>
    </location>
</feature>
<feature type="sequence variant" description="In strain: BT054.">
    <original>Q</original>
    <variation>R</variation>
    <location>
        <position position="50"/>
    </location>
</feature>
<feature type="sequence variant" description="In strain: BT054.">
    <original>S</original>
    <variation>P</variation>
    <location>
        <position position="68"/>
    </location>
</feature>
<feature type="sequence variant" description="In strain: BT054.">
    <original>I</original>
    <variation>V</variation>
    <location>
        <position position="96"/>
    </location>
</feature>
<feature type="sequence variant" description="In strain: BT054.">
    <original>VI</original>
    <variation>AV</variation>
    <location>
        <begin position="104"/>
        <end position="105"/>
    </location>
</feature>
<feature type="sequence variant" description="In strain: BT054.">
    <original>E</original>
    <variation>G</variation>
    <location>
        <position position="107"/>
    </location>
</feature>
<feature type="sequence variant" description="In strain: BT054.">
    <original>N</original>
    <variation>T</variation>
    <location>
        <position position="125"/>
    </location>
</feature>
<feature type="sequence variant" description="In strain: BT054.">
    <original>A</original>
    <variation>T</variation>
    <location>
        <position position="137"/>
    </location>
</feature>
<feature type="sequence variant" description="In strain: BT054.">
    <original>K</original>
    <variation>E</variation>
    <location>
        <position position="151"/>
    </location>
</feature>
<feature type="sequence variant" description="In strain: MO124.">
    <original>N</original>
    <variation>T</variation>
    <location>
        <position position="152"/>
    </location>
</feature>
<feature type="sequence variant" description="In strain: MO124.">
    <original>A</original>
    <variation>S</variation>
    <location>
        <position position="174"/>
    </location>
</feature>
<feature type="sequence variant" description="In strain: BT054.">
    <original>I</original>
    <variation>V</variation>
    <location>
        <position position="178"/>
    </location>
</feature>
<feature type="sequence variant" description="In strain: MO124.">
    <original>T</original>
    <variation>I</variation>
    <location>
        <position position="188"/>
    </location>
</feature>
<feature type="sequence variant" description="In strain: BT054.">
    <original>C</original>
    <variation>G</variation>
    <location>
        <position position="194"/>
    </location>
</feature>
<feature type="sequence variant" description="In strain: MO124.">
    <original>C</original>
    <variation>GSG</variation>
    <location>
        <position position="194"/>
    </location>
</feature>
<feature type="sequence variant" description="In strain: MO124.">
    <original>T</original>
    <variation>P</variation>
    <location>
        <position position="198"/>
    </location>
</feature>
<feature type="sequence variant" description="In strain: BT054 and MO124.">
    <original>T</original>
    <variation>A</variation>
    <location>
        <position position="204"/>
    </location>
</feature>
<feature type="sequence variant" description="In strain: BT054 and MO124.">
    <original>Y</original>
    <variation>F</variation>
    <location>
        <position position="218"/>
    </location>
</feature>
<feature type="sequence variant" description="In strain: BT054.">
    <original>S</original>
    <variation>R</variation>
    <location>
        <position position="228"/>
    </location>
</feature>
<feature type="sequence variant" description="In strain: MO124.">
    <original>M</original>
    <variation>T</variation>
    <location>
        <position position="229"/>
    </location>
</feature>
<feature type="sequence variant" description="In strain: BT054.">
    <original>I</original>
    <variation>V</variation>
    <location>
        <position position="230"/>
    </location>
</feature>
<feature type="sequence variant" description="In strain: MO124.">
    <original>TD</original>
    <variation>AN</variation>
    <location>
        <begin position="237"/>
        <end position="238"/>
    </location>
</feature>
<feature type="sequence variant" description="In strain: MO124.">
    <original>A</original>
    <variation>E</variation>
    <location>
        <position position="241"/>
    </location>
</feature>
<feature type="sequence variant" description="In strain: BT054 and MO124.">
    <original>G</original>
    <variation>V</variation>
    <location>
        <position position="243"/>
    </location>
</feature>
<feature type="sequence variant" description="In strain: BT054 and MO124.">
    <original>A</original>
    <variation>S</variation>
    <location>
        <position position="253"/>
    </location>
</feature>
<feature type="sequence variant" description="In strain: BT054 and MO124.">
    <original>K</original>
    <variation>Q</variation>
    <location>
        <position position="259"/>
    </location>
</feature>
<feature type="sequence variant" description="In strain: BT054 and MO124.">
    <original>A</original>
    <variation>V</variation>
    <location>
        <position position="275"/>
    </location>
</feature>
<organism>
    <name type="scientific">Neisseria meningitidis serogroup C</name>
    <dbReference type="NCBI Taxonomy" id="135720"/>
    <lineage>
        <taxon>Bacteria</taxon>
        <taxon>Pseudomonadati</taxon>
        <taxon>Pseudomonadota</taxon>
        <taxon>Betaproteobacteria</taxon>
        <taxon>Neisseriales</taxon>
        <taxon>Neisseriaceae</taxon>
        <taxon>Neisseria</taxon>
    </lineage>
</organism>
<reference key="1">
    <citation type="journal article" date="1992" name="J. Bacteriol.">
        <title>Transformational exchanges in the dihydropteroate synthase gene of Neisseria meningitidis: a novel mechanism for acquisition of sulfonamide resistance.</title>
        <authorList>
            <person name="Raadstroem P."/>
            <person name="Fermer C."/>
            <person name="Kristiansen B.-E."/>
            <person name="Jenkins A."/>
            <person name="Skoeld O."/>
            <person name="Swedberg G."/>
        </authorList>
    </citation>
    <scope>NUCLEOTIDE SEQUENCE [GENOMIC DNA]</scope>
    <source>
        <strain>BT054 / Serogroup C / Serotype 15</strain>
        <strain>BT227 / Serogroup C / Serotype 2a</strain>
        <strain>CCUG 23102 / MO124 / Serogroup C / Serotype 15</strain>
    </source>
</reference>
<proteinExistence type="inferred from homology"/>
<sequence length="283" mass="30167">MARHVWQAGRFEIGLDKPKIMGIVNLTPDSFSDGGVYSQNAQTALAHAEQLLKEGADILDIGGESTRSGADYVSPEEEWARVEPVLAEVAGWGVPISLDTRRTVIMEKALALGGIDIINDVAALNDEGAVELLARQADTGICLMHMQGLPKNMQINPKYQDVVGEVARYLKARAAECIAAGIAPQRITLDPGFCFGKTLQHNITLMRHLPELMAETGYPLLIGVSRKSMIGELTGETDAAARGHGSVAAALAAVARGAKIVRVHDVKATADALKAWEALGINL</sequence>
<protein>
    <recommendedName>
        <fullName>Dihydropteroate synthase</fullName>
        <shortName>DHPS</shortName>
        <ecNumber>2.5.1.15</ecNumber>
    </recommendedName>
    <alternativeName>
        <fullName>Dihydropteroate pyrophosphorylase</fullName>
    </alternativeName>
</protein>
<comment type="function">
    <text evidence="1">Catalyzes the condensation of para-aminobenzoate (pABA) with 6-hydroxymethyl-7,8-dihydropterin diphosphate (DHPt-PP) to form 7,8-dihydropteroate (H2Pte), the immediate precursor of folate derivatives.</text>
</comment>
<comment type="catalytic activity">
    <reaction evidence="1">
        <text>(7,8-dihydropterin-6-yl)methyl diphosphate + 4-aminobenzoate = 7,8-dihydropteroate + diphosphate</text>
        <dbReference type="Rhea" id="RHEA:19949"/>
        <dbReference type="ChEBI" id="CHEBI:17836"/>
        <dbReference type="ChEBI" id="CHEBI:17839"/>
        <dbReference type="ChEBI" id="CHEBI:33019"/>
        <dbReference type="ChEBI" id="CHEBI:72950"/>
        <dbReference type="EC" id="2.5.1.15"/>
    </reaction>
</comment>
<comment type="cofactor">
    <cofactor evidence="1">
        <name>Mg(2+)</name>
        <dbReference type="ChEBI" id="CHEBI:18420"/>
    </cofactor>
</comment>
<comment type="pathway">
    <text>Cofactor biosynthesis; tetrahydrofolate biosynthesis; 7,8-dihydrofolate from 2-amino-4-hydroxy-6-hydroxymethyl-7,8-dihydropteridine diphosphate and 4-aminobenzoate: step 1/2.</text>
</comment>
<comment type="subunit">
    <text>Homodimer.</text>
</comment>
<comment type="similarity">
    <text evidence="4">Belongs to the DHPS family.</text>
</comment>
<dbReference type="EC" id="2.5.1.15"/>
<dbReference type="EMBL" id="X68063">
    <property type="protein sequence ID" value="CAA48200.1"/>
    <property type="molecule type" value="Genomic_DNA"/>
</dbReference>
<dbReference type="EMBL" id="X68067">
    <property type="protein sequence ID" value="CAA48204.1"/>
    <property type="molecule type" value="Genomic_DNA"/>
</dbReference>
<dbReference type="EMBL" id="X68064">
    <property type="protein sequence ID" value="CAA48201.1"/>
    <property type="molecule type" value="Genomic_DNA"/>
</dbReference>
<dbReference type="PIR" id="A57423">
    <property type="entry name" value="A57423"/>
</dbReference>
<dbReference type="PIR" id="S25612">
    <property type="entry name" value="S25612"/>
</dbReference>
<dbReference type="SMR" id="P57696"/>
<dbReference type="UniPathway" id="UPA00077">
    <property type="reaction ID" value="UER00156"/>
</dbReference>
<dbReference type="GO" id="GO:0005829">
    <property type="term" value="C:cytosol"/>
    <property type="evidence" value="ECO:0007669"/>
    <property type="project" value="TreeGrafter"/>
</dbReference>
<dbReference type="GO" id="GO:0004156">
    <property type="term" value="F:dihydropteroate synthase activity"/>
    <property type="evidence" value="ECO:0007669"/>
    <property type="project" value="UniProtKB-EC"/>
</dbReference>
<dbReference type="GO" id="GO:0046872">
    <property type="term" value="F:metal ion binding"/>
    <property type="evidence" value="ECO:0007669"/>
    <property type="project" value="UniProtKB-KW"/>
</dbReference>
<dbReference type="GO" id="GO:0046656">
    <property type="term" value="P:folic acid biosynthetic process"/>
    <property type="evidence" value="ECO:0007669"/>
    <property type="project" value="UniProtKB-KW"/>
</dbReference>
<dbReference type="GO" id="GO:0046654">
    <property type="term" value="P:tetrahydrofolate biosynthetic process"/>
    <property type="evidence" value="ECO:0007669"/>
    <property type="project" value="UniProtKB-UniPathway"/>
</dbReference>
<dbReference type="CDD" id="cd00739">
    <property type="entry name" value="DHPS"/>
    <property type="match status" value="1"/>
</dbReference>
<dbReference type="FunFam" id="3.20.20.20:FF:000013">
    <property type="entry name" value="Dihydropteroate synthase"/>
    <property type="match status" value="1"/>
</dbReference>
<dbReference type="Gene3D" id="3.20.20.20">
    <property type="entry name" value="Dihydropteroate synthase-like"/>
    <property type="match status" value="1"/>
</dbReference>
<dbReference type="InterPro" id="IPR045031">
    <property type="entry name" value="DHP_synth-like"/>
</dbReference>
<dbReference type="InterPro" id="IPR006390">
    <property type="entry name" value="DHP_synth_dom"/>
</dbReference>
<dbReference type="InterPro" id="IPR011005">
    <property type="entry name" value="Dihydropteroate_synth-like_sf"/>
</dbReference>
<dbReference type="InterPro" id="IPR000489">
    <property type="entry name" value="Pterin-binding_dom"/>
</dbReference>
<dbReference type="NCBIfam" id="TIGR01496">
    <property type="entry name" value="DHPS"/>
    <property type="match status" value="1"/>
</dbReference>
<dbReference type="PANTHER" id="PTHR20941">
    <property type="entry name" value="FOLATE SYNTHESIS PROTEINS"/>
    <property type="match status" value="1"/>
</dbReference>
<dbReference type="PANTHER" id="PTHR20941:SF1">
    <property type="entry name" value="FOLIC ACID SYNTHESIS PROTEIN FOL1"/>
    <property type="match status" value="1"/>
</dbReference>
<dbReference type="Pfam" id="PF00809">
    <property type="entry name" value="Pterin_bind"/>
    <property type="match status" value="1"/>
</dbReference>
<dbReference type="SUPFAM" id="SSF51717">
    <property type="entry name" value="Dihydropteroate synthetase-like"/>
    <property type="match status" value="1"/>
</dbReference>
<dbReference type="PROSITE" id="PS00792">
    <property type="entry name" value="DHPS_1"/>
    <property type="match status" value="1"/>
</dbReference>
<dbReference type="PROSITE" id="PS50972">
    <property type="entry name" value="PTERIN_BINDING"/>
    <property type="match status" value="1"/>
</dbReference>
<gene>
    <name type="primary">folP</name>
    <name type="synonym">dhpS</name>
</gene>
<keyword id="KW-0289">Folate biosynthesis</keyword>
<keyword id="KW-0460">Magnesium</keyword>
<keyword id="KW-0479">Metal-binding</keyword>
<keyword id="KW-0808">Transferase</keyword>